<proteinExistence type="inferred from homology"/>
<keyword id="KW-0067">ATP-binding</keyword>
<keyword id="KW-0963">Cytoplasm</keyword>
<keyword id="KW-0227">DNA damage</keyword>
<keyword id="KW-0234">DNA repair</keyword>
<keyword id="KW-0235">DNA replication</keyword>
<keyword id="KW-0238">DNA-binding</keyword>
<keyword id="KW-0547">Nucleotide-binding</keyword>
<keyword id="KW-1185">Reference proteome</keyword>
<keyword id="KW-0742">SOS response</keyword>
<gene>
    <name evidence="1" type="primary">recF</name>
    <name type="ordered locus">Plut_0002</name>
</gene>
<name>RECF_CHLL3</name>
<sequence length="369" mass="41296">MRLKNIQVENFRNHHSLAFQPEEGITVLYGPNGSGKTSVLEAIHYCALTKSLLGAPESECLAFSEEYFIISGEFVSTRGTSLSVKVSYGKDRGKLVQLNQSEVKPFSQHVGTIPCITFSPSEIAIVNGSPGERRRFLDNALSQSDRRYLDELLDYRRVLQQRNALLLQLASSSGGSREMLDLWTENLADLAAGVTLRRISFLGELSVYFEPLQTSLAGKGSHLVTYRSSFGTIDSGLSRDELRDRYIKRFKETQRQELLRTQTMSGPHRDDLLFLSNGREIKKYGSQGQQRAFLISLKLALFRYFSHRLPESPICLFDDMFSELDAERTSEIFNILEDCGQTILTTTDGSLHPASQAVSVTALPGYRGG</sequence>
<feature type="chain" id="PRO_1000121136" description="DNA replication and repair protein RecF">
    <location>
        <begin position="1"/>
        <end position="369"/>
    </location>
</feature>
<feature type="binding site" evidence="1">
    <location>
        <begin position="30"/>
        <end position="37"/>
    </location>
    <ligand>
        <name>ATP</name>
        <dbReference type="ChEBI" id="CHEBI:30616"/>
    </ligand>
</feature>
<dbReference type="EMBL" id="CP000096">
    <property type="protein sequence ID" value="ABB22894.1"/>
    <property type="molecule type" value="Genomic_DNA"/>
</dbReference>
<dbReference type="RefSeq" id="WP_011356770.1">
    <property type="nucleotide sequence ID" value="NC_007512.1"/>
</dbReference>
<dbReference type="SMR" id="Q3B6Y7"/>
<dbReference type="STRING" id="319225.Plut_0002"/>
<dbReference type="KEGG" id="plt:Plut_0002"/>
<dbReference type="eggNOG" id="COG1195">
    <property type="taxonomic scope" value="Bacteria"/>
</dbReference>
<dbReference type="HOGENOM" id="CLU_040267_0_1_10"/>
<dbReference type="OrthoDB" id="9803889at2"/>
<dbReference type="Proteomes" id="UP000002709">
    <property type="component" value="Chromosome"/>
</dbReference>
<dbReference type="GO" id="GO:0005737">
    <property type="term" value="C:cytoplasm"/>
    <property type="evidence" value="ECO:0007669"/>
    <property type="project" value="UniProtKB-SubCell"/>
</dbReference>
<dbReference type="GO" id="GO:0005524">
    <property type="term" value="F:ATP binding"/>
    <property type="evidence" value="ECO:0007669"/>
    <property type="project" value="UniProtKB-UniRule"/>
</dbReference>
<dbReference type="GO" id="GO:0003697">
    <property type="term" value="F:single-stranded DNA binding"/>
    <property type="evidence" value="ECO:0007669"/>
    <property type="project" value="UniProtKB-UniRule"/>
</dbReference>
<dbReference type="GO" id="GO:0006260">
    <property type="term" value="P:DNA replication"/>
    <property type="evidence" value="ECO:0007669"/>
    <property type="project" value="UniProtKB-UniRule"/>
</dbReference>
<dbReference type="GO" id="GO:0000731">
    <property type="term" value="P:DNA synthesis involved in DNA repair"/>
    <property type="evidence" value="ECO:0007669"/>
    <property type="project" value="TreeGrafter"/>
</dbReference>
<dbReference type="GO" id="GO:0006302">
    <property type="term" value="P:double-strand break repair"/>
    <property type="evidence" value="ECO:0007669"/>
    <property type="project" value="TreeGrafter"/>
</dbReference>
<dbReference type="GO" id="GO:0009432">
    <property type="term" value="P:SOS response"/>
    <property type="evidence" value="ECO:0007669"/>
    <property type="project" value="UniProtKB-UniRule"/>
</dbReference>
<dbReference type="Gene3D" id="3.40.50.300">
    <property type="entry name" value="P-loop containing nucleotide triphosphate hydrolases"/>
    <property type="match status" value="1"/>
</dbReference>
<dbReference type="Gene3D" id="1.20.1050.90">
    <property type="entry name" value="RecF/RecN/SMC, N-terminal domain"/>
    <property type="match status" value="1"/>
</dbReference>
<dbReference type="HAMAP" id="MF_00365">
    <property type="entry name" value="RecF"/>
    <property type="match status" value="1"/>
</dbReference>
<dbReference type="InterPro" id="IPR001238">
    <property type="entry name" value="DNA-binding_RecF"/>
</dbReference>
<dbReference type="InterPro" id="IPR018078">
    <property type="entry name" value="DNA-binding_RecF_CS"/>
</dbReference>
<dbReference type="InterPro" id="IPR027417">
    <property type="entry name" value="P-loop_NTPase"/>
</dbReference>
<dbReference type="InterPro" id="IPR003395">
    <property type="entry name" value="RecF/RecN/SMC_N"/>
</dbReference>
<dbReference type="InterPro" id="IPR042174">
    <property type="entry name" value="RecF_2"/>
</dbReference>
<dbReference type="NCBIfam" id="TIGR00611">
    <property type="entry name" value="recf"/>
    <property type="match status" value="1"/>
</dbReference>
<dbReference type="PANTHER" id="PTHR32182">
    <property type="entry name" value="DNA REPLICATION AND REPAIR PROTEIN RECF"/>
    <property type="match status" value="1"/>
</dbReference>
<dbReference type="PANTHER" id="PTHR32182:SF0">
    <property type="entry name" value="DNA REPLICATION AND REPAIR PROTEIN RECF"/>
    <property type="match status" value="1"/>
</dbReference>
<dbReference type="Pfam" id="PF02463">
    <property type="entry name" value="SMC_N"/>
    <property type="match status" value="1"/>
</dbReference>
<dbReference type="SUPFAM" id="SSF52540">
    <property type="entry name" value="P-loop containing nucleoside triphosphate hydrolases"/>
    <property type="match status" value="1"/>
</dbReference>
<dbReference type="PROSITE" id="PS00617">
    <property type="entry name" value="RECF_1"/>
    <property type="match status" value="1"/>
</dbReference>
<organism>
    <name type="scientific">Chlorobium luteolum (strain DSM 273 / BCRC 81028 / 2530)</name>
    <name type="common">Pelodictyon luteolum</name>
    <dbReference type="NCBI Taxonomy" id="319225"/>
    <lineage>
        <taxon>Bacteria</taxon>
        <taxon>Pseudomonadati</taxon>
        <taxon>Chlorobiota</taxon>
        <taxon>Chlorobiia</taxon>
        <taxon>Chlorobiales</taxon>
        <taxon>Chlorobiaceae</taxon>
        <taxon>Chlorobium/Pelodictyon group</taxon>
        <taxon>Pelodictyon</taxon>
    </lineage>
</organism>
<comment type="function">
    <text evidence="1">The RecF protein is involved in DNA metabolism; it is required for DNA replication and normal SOS inducibility. RecF binds preferentially to single-stranded, linear DNA. It also seems to bind ATP.</text>
</comment>
<comment type="subcellular location">
    <subcellularLocation>
        <location evidence="1">Cytoplasm</location>
    </subcellularLocation>
</comment>
<comment type="similarity">
    <text evidence="1">Belongs to the RecF family.</text>
</comment>
<reference key="1">
    <citation type="submission" date="2005-08" db="EMBL/GenBank/DDBJ databases">
        <title>Complete sequence of Pelodictyon luteolum DSM 273.</title>
        <authorList>
            <consortium name="US DOE Joint Genome Institute"/>
            <person name="Copeland A."/>
            <person name="Lucas S."/>
            <person name="Lapidus A."/>
            <person name="Barry K."/>
            <person name="Detter J.C."/>
            <person name="Glavina T."/>
            <person name="Hammon N."/>
            <person name="Israni S."/>
            <person name="Pitluck S."/>
            <person name="Bryant D."/>
            <person name="Schmutz J."/>
            <person name="Larimer F."/>
            <person name="Land M."/>
            <person name="Kyrpides N."/>
            <person name="Ivanova N."/>
            <person name="Richardson P."/>
        </authorList>
    </citation>
    <scope>NUCLEOTIDE SEQUENCE [LARGE SCALE GENOMIC DNA]</scope>
    <source>
        <strain>DSM 273 / BCRC 81028 / 2530</strain>
    </source>
</reference>
<protein>
    <recommendedName>
        <fullName evidence="1">DNA replication and repair protein RecF</fullName>
    </recommendedName>
</protein>
<accession>Q3B6Y7</accession>
<evidence type="ECO:0000255" key="1">
    <source>
        <dbReference type="HAMAP-Rule" id="MF_00365"/>
    </source>
</evidence>